<name>YOHJ_ECO5E</name>
<protein>
    <recommendedName>
        <fullName evidence="1">UPF0299 membrane protein YohJ</fullName>
    </recommendedName>
</protein>
<organism>
    <name type="scientific">Escherichia coli O157:H7 (strain EC4115 / EHEC)</name>
    <dbReference type="NCBI Taxonomy" id="444450"/>
    <lineage>
        <taxon>Bacteria</taxon>
        <taxon>Pseudomonadati</taxon>
        <taxon>Pseudomonadota</taxon>
        <taxon>Gammaproteobacteria</taxon>
        <taxon>Enterobacterales</taxon>
        <taxon>Enterobacteriaceae</taxon>
        <taxon>Escherichia</taxon>
    </lineage>
</organism>
<gene>
    <name evidence="1" type="primary">yohJ</name>
    <name type="ordered locus">ECH74115_3273</name>
</gene>
<reference key="1">
    <citation type="journal article" date="2011" name="Proc. Natl. Acad. Sci. U.S.A.">
        <title>Genomic anatomy of Escherichia coli O157:H7 outbreaks.</title>
        <authorList>
            <person name="Eppinger M."/>
            <person name="Mammel M.K."/>
            <person name="Leclerc J.E."/>
            <person name="Ravel J."/>
            <person name="Cebula T.A."/>
        </authorList>
    </citation>
    <scope>NUCLEOTIDE SEQUENCE [LARGE SCALE GENOMIC DNA]</scope>
    <source>
        <strain>EC4115 / EHEC</strain>
    </source>
</reference>
<accession>B5YW73</accession>
<dbReference type="EMBL" id="CP001164">
    <property type="protein sequence ID" value="ACI38068.1"/>
    <property type="molecule type" value="Genomic_DNA"/>
</dbReference>
<dbReference type="RefSeq" id="WP_001299855.1">
    <property type="nucleotide sequence ID" value="NC_011353.1"/>
</dbReference>
<dbReference type="SMR" id="B5YW73"/>
<dbReference type="KEGG" id="ecf:ECH74115_3273"/>
<dbReference type="HOGENOM" id="CLU_113736_1_1_6"/>
<dbReference type="GO" id="GO:0005886">
    <property type="term" value="C:plasma membrane"/>
    <property type="evidence" value="ECO:0007669"/>
    <property type="project" value="UniProtKB-SubCell"/>
</dbReference>
<dbReference type="HAMAP" id="MF_01144">
    <property type="entry name" value="UPF0299"/>
    <property type="match status" value="1"/>
</dbReference>
<dbReference type="InterPro" id="IPR005538">
    <property type="entry name" value="LrgA/CidA"/>
</dbReference>
<dbReference type="InterPro" id="IPR022957">
    <property type="entry name" value="Uncharacterised_UPF0299"/>
</dbReference>
<dbReference type="NCBIfam" id="NF002494">
    <property type="entry name" value="PRK01821.1"/>
    <property type="match status" value="1"/>
</dbReference>
<dbReference type="PANTHER" id="PTHR33931">
    <property type="entry name" value="HOLIN-LIKE PROTEIN CIDA-RELATED"/>
    <property type="match status" value="1"/>
</dbReference>
<dbReference type="PANTHER" id="PTHR33931:SF5">
    <property type="entry name" value="UPF0299 MEMBRANE PROTEIN YOHJ"/>
    <property type="match status" value="1"/>
</dbReference>
<dbReference type="Pfam" id="PF03788">
    <property type="entry name" value="LrgA"/>
    <property type="match status" value="1"/>
</dbReference>
<feature type="chain" id="PRO_1000137356" description="UPF0299 membrane protein YohJ">
    <location>
        <begin position="1"/>
        <end position="132"/>
    </location>
</feature>
<feature type="transmembrane region" description="Helical" evidence="1">
    <location>
        <begin position="7"/>
        <end position="27"/>
    </location>
</feature>
<feature type="transmembrane region" description="Helical" evidence="1">
    <location>
        <begin position="31"/>
        <end position="51"/>
    </location>
</feature>
<feature type="transmembrane region" description="Helical" evidence="1">
    <location>
        <begin position="63"/>
        <end position="83"/>
    </location>
</feature>
<feature type="transmembrane region" description="Helical" evidence="1">
    <location>
        <begin position="93"/>
        <end position="113"/>
    </location>
</feature>
<comment type="subcellular location">
    <subcellularLocation>
        <location evidence="1">Cell inner membrane</location>
        <topology evidence="1">Multi-pass membrane protein</topology>
    </subcellularLocation>
</comment>
<comment type="similarity">
    <text evidence="1">Belongs to the UPF0299 family.</text>
</comment>
<sequence length="132" mass="14593">MSKTLNIIWQYLRAFVLIYACLYAGIFIASLLPVTIPGSIIGMLILFVLLALQILPAKWVNPGCYVLIRYMALLFVPIGVGVMQYFDLLRAQFGPVVVSCAISTLVVFLVVSWSSQLVHGERKVVGQKGSEE</sequence>
<evidence type="ECO:0000255" key="1">
    <source>
        <dbReference type="HAMAP-Rule" id="MF_01144"/>
    </source>
</evidence>
<proteinExistence type="inferred from homology"/>
<keyword id="KW-0997">Cell inner membrane</keyword>
<keyword id="KW-1003">Cell membrane</keyword>
<keyword id="KW-0472">Membrane</keyword>
<keyword id="KW-0812">Transmembrane</keyword>
<keyword id="KW-1133">Transmembrane helix</keyword>